<organism>
    <name type="scientific">Saccharomyces cerevisiae (strain ATCC 204508 / S288c)</name>
    <name type="common">Baker's yeast</name>
    <dbReference type="NCBI Taxonomy" id="559292"/>
    <lineage>
        <taxon>Eukaryota</taxon>
        <taxon>Fungi</taxon>
        <taxon>Dikarya</taxon>
        <taxon>Ascomycota</taxon>
        <taxon>Saccharomycotina</taxon>
        <taxon>Saccharomycetes</taxon>
        <taxon>Saccharomycetales</taxon>
        <taxon>Saccharomycetaceae</taxon>
        <taxon>Saccharomyces</taxon>
    </lineage>
</organism>
<protein>
    <recommendedName>
        <fullName evidence="4">Protein AST2</fullName>
    </recommendedName>
    <alternativeName>
        <fullName evidence="3">ATPAse stabilizing protein 1</fullName>
    </alternativeName>
</protein>
<comment type="function">
    <text evidence="1 5">Lipid raft-associated protein involved in the targeting of PMA1 from Golgi to the plasma membrane (Probable). May induce clustering of PMA1, which facilitates partition of PMA1 into lipid rafts after leaving the ER its and transport to the cell surface (By similarity).</text>
</comment>
<comment type="miscellaneous">
    <text evidence="2">Present with 937 molecules/cell in log phase SD medium.</text>
</comment>
<dbReference type="EMBL" id="U18839">
    <property type="protein sequence ID" value="AAB64656.1"/>
    <property type="molecule type" value="Genomic_DNA"/>
</dbReference>
<dbReference type="EMBL" id="BK006939">
    <property type="protein sequence ID" value="DAA07762.1"/>
    <property type="molecule type" value="Genomic_DNA"/>
</dbReference>
<dbReference type="PIR" id="S50604">
    <property type="entry name" value="S50604"/>
</dbReference>
<dbReference type="RefSeq" id="NP_011027.1">
    <property type="nucleotide sequence ID" value="NM_001178992.1"/>
</dbReference>
<dbReference type="SMR" id="P39945"/>
<dbReference type="BioGRID" id="36847">
    <property type="interactions" value="130"/>
</dbReference>
<dbReference type="DIP" id="DIP-2914N"/>
<dbReference type="FunCoup" id="P39945">
    <property type="interactions" value="102"/>
</dbReference>
<dbReference type="IntAct" id="P39945">
    <property type="interactions" value="4"/>
</dbReference>
<dbReference type="MINT" id="P39945"/>
<dbReference type="STRING" id="4932.YER101C"/>
<dbReference type="iPTMnet" id="P39945"/>
<dbReference type="PaxDb" id="4932-YER101C"/>
<dbReference type="PeptideAtlas" id="P39945"/>
<dbReference type="EnsemblFungi" id="YER101C_mRNA">
    <property type="protein sequence ID" value="YER101C"/>
    <property type="gene ID" value="YER101C"/>
</dbReference>
<dbReference type="GeneID" id="856838"/>
<dbReference type="KEGG" id="sce:YER101C"/>
<dbReference type="AGR" id="SGD:S000000903"/>
<dbReference type="SGD" id="S000000903">
    <property type="gene designation" value="AST2"/>
</dbReference>
<dbReference type="VEuPathDB" id="FungiDB:YER101C"/>
<dbReference type="eggNOG" id="KOG1198">
    <property type="taxonomic scope" value="Eukaryota"/>
</dbReference>
<dbReference type="GeneTree" id="ENSGT00940000176396"/>
<dbReference type="HOGENOM" id="CLU_026673_4_0_1"/>
<dbReference type="InParanoid" id="P39945"/>
<dbReference type="OMA" id="NYVGLNP"/>
<dbReference type="OrthoDB" id="201656at2759"/>
<dbReference type="BioCyc" id="YEAST:G3O-30266-MONOMER"/>
<dbReference type="BioGRID-ORCS" id="856838">
    <property type="hits" value="3 hits in 10 CRISPR screens"/>
</dbReference>
<dbReference type="CD-CODE" id="E03F929F">
    <property type="entry name" value="Stress granule"/>
</dbReference>
<dbReference type="PRO" id="PR:P39945"/>
<dbReference type="Proteomes" id="UP000002311">
    <property type="component" value="Chromosome V"/>
</dbReference>
<dbReference type="RNAct" id="P39945">
    <property type="molecule type" value="protein"/>
</dbReference>
<dbReference type="GO" id="GO:0005737">
    <property type="term" value="C:cytoplasm"/>
    <property type="evidence" value="ECO:0007005"/>
    <property type="project" value="SGD"/>
</dbReference>
<dbReference type="GO" id="GO:0016491">
    <property type="term" value="F:oxidoreductase activity"/>
    <property type="evidence" value="ECO:0007669"/>
    <property type="project" value="InterPro"/>
</dbReference>
<dbReference type="GO" id="GO:0006612">
    <property type="term" value="P:protein targeting to membrane"/>
    <property type="evidence" value="ECO:0000316"/>
    <property type="project" value="SGD"/>
</dbReference>
<dbReference type="CDD" id="cd08247">
    <property type="entry name" value="AST1_like"/>
    <property type="match status" value="1"/>
</dbReference>
<dbReference type="FunFam" id="3.40.50.720:FF:000547">
    <property type="entry name" value="Ast1p"/>
    <property type="match status" value="1"/>
</dbReference>
<dbReference type="FunFam" id="3.90.180.10:FF:000038">
    <property type="entry name" value="Ast1p"/>
    <property type="match status" value="1"/>
</dbReference>
<dbReference type="Gene3D" id="3.90.180.10">
    <property type="entry name" value="Medium-chain alcohol dehydrogenases, catalytic domain"/>
    <property type="match status" value="2"/>
</dbReference>
<dbReference type="Gene3D" id="3.40.50.720">
    <property type="entry name" value="NAD(P)-binding Rossmann-like Domain"/>
    <property type="match status" value="2"/>
</dbReference>
<dbReference type="InterPro" id="IPR013154">
    <property type="entry name" value="ADH-like_N"/>
</dbReference>
<dbReference type="InterPro" id="IPR011032">
    <property type="entry name" value="GroES-like_sf"/>
</dbReference>
<dbReference type="InterPro" id="IPR052585">
    <property type="entry name" value="Lipid_raft_assoc_Zn_ADH"/>
</dbReference>
<dbReference type="InterPro" id="IPR036291">
    <property type="entry name" value="NAD(P)-bd_dom_sf"/>
</dbReference>
<dbReference type="InterPro" id="IPR020843">
    <property type="entry name" value="PKS_ER"/>
</dbReference>
<dbReference type="PANTHER" id="PTHR43482">
    <property type="entry name" value="PROTEIN AST1-RELATED"/>
    <property type="match status" value="1"/>
</dbReference>
<dbReference type="PANTHER" id="PTHR43482:SF1">
    <property type="entry name" value="PROTEIN AST1-RELATED"/>
    <property type="match status" value="1"/>
</dbReference>
<dbReference type="Pfam" id="PF08240">
    <property type="entry name" value="ADH_N"/>
    <property type="match status" value="1"/>
</dbReference>
<dbReference type="Pfam" id="PF13602">
    <property type="entry name" value="ADH_zinc_N_2"/>
    <property type="match status" value="1"/>
</dbReference>
<dbReference type="SMART" id="SM00829">
    <property type="entry name" value="PKS_ER"/>
    <property type="match status" value="1"/>
</dbReference>
<dbReference type="SUPFAM" id="SSF50129">
    <property type="entry name" value="GroES-like"/>
    <property type="match status" value="1"/>
</dbReference>
<dbReference type="SUPFAM" id="SSF51735">
    <property type="entry name" value="NAD(P)-binding Rossmann-fold domains"/>
    <property type="match status" value="1"/>
</dbReference>
<accession>P39945</accession>
<accession>D3DM08</accession>
<gene>
    <name evidence="3" type="primary">AST2</name>
    <name type="ordered locus">YER101C</name>
</gene>
<feature type="chain" id="PRO_0000064711" description="Protein AST2">
    <location>
        <begin position="1"/>
        <end position="430"/>
    </location>
</feature>
<sequence>MAEKILENKDPKLEAMTVDHEVSAPKPIPVDEPTLTRVARPLRHVRHIPVKSLVFHSKHGPITFSYENKIKLPISKNKLVVQVNYVGLNPVDMKIRNGYTKPIYGEAGIGREYSGVITHVGDNLTNRWNVGDDVYGIYYHPKLAIGALQSSLLIDPRVDPILMRPKNTLSPEKAAGSLFCLGTALNLLAQLKEKDQLNTESNVLINGGTSSVGMFAIQLLKRYYKVSKKLVVVTSGNGAAVLSEHFPDLKDEIIFINYLSCRGKSSKPLRRMLDTGKVVDYDDFNTLKETEDYTQGKFNVVLDFIGGYDILSHSSSLIHAKGAYITTVGDYVGNYKKDVFDSWDNPSANARKMFGSMLWSYDYSHFYFDPNIKIIPKKNDWIHECGKLLNEGVVDCVVDKVYSWKNFKEAFSYMATQRAQGKLIMKVEGF</sequence>
<reference key="1">
    <citation type="journal article" date="1997" name="Nature">
        <title>The nucleotide sequence of Saccharomyces cerevisiae chromosome V.</title>
        <authorList>
            <person name="Dietrich F.S."/>
            <person name="Mulligan J.T."/>
            <person name="Hennessy K.M."/>
            <person name="Yelton M.A."/>
            <person name="Allen E."/>
            <person name="Araujo R."/>
            <person name="Aviles E."/>
            <person name="Berno A."/>
            <person name="Brennan T."/>
            <person name="Carpenter J."/>
            <person name="Chen E."/>
            <person name="Cherry J.M."/>
            <person name="Chung E."/>
            <person name="Duncan M."/>
            <person name="Guzman E."/>
            <person name="Hartzell G."/>
            <person name="Hunicke-Smith S."/>
            <person name="Hyman R.W."/>
            <person name="Kayser A."/>
            <person name="Komp C."/>
            <person name="Lashkari D."/>
            <person name="Lew H."/>
            <person name="Lin D."/>
            <person name="Mosedale D."/>
            <person name="Nakahara K."/>
            <person name="Namath A."/>
            <person name="Norgren R."/>
            <person name="Oefner P."/>
            <person name="Oh C."/>
            <person name="Petel F.X."/>
            <person name="Roberts D."/>
            <person name="Sehl P."/>
            <person name="Schramm S."/>
            <person name="Shogren T."/>
            <person name="Smith V."/>
            <person name="Taylor P."/>
            <person name="Wei Y."/>
            <person name="Botstein D."/>
            <person name="Davis R.W."/>
        </authorList>
    </citation>
    <scope>NUCLEOTIDE SEQUENCE [LARGE SCALE GENOMIC DNA]</scope>
    <source>
        <strain>ATCC 204508 / S288c</strain>
    </source>
</reference>
<reference key="2">
    <citation type="journal article" date="2014" name="G3 (Bethesda)">
        <title>The reference genome sequence of Saccharomyces cerevisiae: Then and now.</title>
        <authorList>
            <person name="Engel S.R."/>
            <person name="Dietrich F.S."/>
            <person name="Fisk D.G."/>
            <person name="Binkley G."/>
            <person name="Balakrishnan R."/>
            <person name="Costanzo M.C."/>
            <person name="Dwight S.S."/>
            <person name="Hitz B.C."/>
            <person name="Karra K."/>
            <person name="Nash R.S."/>
            <person name="Weng S."/>
            <person name="Wong E.D."/>
            <person name="Lloyd P."/>
            <person name="Skrzypek M.S."/>
            <person name="Miyasato S.R."/>
            <person name="Simison M."/>
            <person name="Cherry J.M."/>
        </authorList>
    </citation>
    <scope>GENOME REANNOTATION</scope>
    <source>
        <strain>ATCC 204508 / S288c</strain>
    </source>
</reference>
<reference key="3">
    <citation type="journal article" date="1995" name="J. Cell Biol.">
        <title>Targeting of the yeast plasma membrane [H+]ATPase: a novel gene AST1 prevents mislocalization of mutant ATPase to the vacuole.</title>
        <authorList>
            <person name="Chang A."/>
            <person name="Fink G.R."/>
        </authorList>
    </citation>
    <scope>FUNCTION</scope>
</reference>
<reference key="4">
    <citation type="journal article" date="2003" name="Nature">
        <title>Global analysis of protein expression in yeast.</title>
        <authorList>
            <person name="Ghaemmaghami S."/>
            <person name="Huh W.-K."/>
            <person name="Bower K."/>
            <person name="Howson R.W."/>
            <person name="Belle A."/>
            <person name="Dephoure N."/>
            <person name="O'Shea E.K."/>
            <person name="Weissman J.S."/>
        </authorList>
    </citation>
    <scope>LEVEL OF PROTEIN EXPRESSION [LARGE SCALE ANALYSIS]</scope>
</reference>
<evidence type="ECO:0000250" key="1">
    <source>
        <dbReference type="UniProtKB" id="P35183"/>
    </source>
</evidence>
<evidence type="ECO:0000269" key="2">
    <source>
    </source>
</evidence>
<evidence type="ECO:0000303" key="3">
    <source>
    </source>
</evidence>
<evidence type="ECO:0000305" key="4"/>
<evidence type="ECO:0000305" key="5">
    <source>
    </source>
</evidence>
<keyword id="KW-1185">Reference proteome</keyword>
<name>AST2_YEAST</name>
<proteinExistence type="evidence at protein level"/>